<sequence>MKTKLNIKLYDEKLLWCTLCLLLIGVTMVTSSSIPIAYRIYHDMLFFTKKQILYLVILFFIFKIFLDVPISFWQKNNKIILLISISTLLLVLIIGNSIHGSLRWITISYVSMQPSELSKLAMFCYLSNYLSQKNSEIVNNFGGFLKPIIIISFPLILLLVEPDLGTTIVILLTTLSLLFISGTKIQKFIPTILIIVVTTTVLIIKSPYRFERIMSFWNPWNDPFGKGYQLTQSLMALGRGNIFGMGLGHSIQKLEYLPEAHTDFIFAIIGEELGYIGACTILFMIFFISFRAFKIGKIALKNKIFFSGYFAFSIGLWLIFQTLINVGTTIGLLPTKGLTLPLISYGGSSLIIVSIAIIILIRIDFELRMKNIQAFYKTDI</sequence>
<organism>
    <name type="scientific">Buchnera aphidicola subsp. Baizongia pistaciae (strain Bp)</name>
    <dbReference type="NCBI Taxonomy" id="224915"/>
    <lineage>
        <taxon>Bacteria</taxon>
        <taxon>Pseudomonadati</taxon>
        <taxon>Pseudomonadota</taxon>
        <taxon>Gammaproteobacteria</taxon>
        <taxon>Enterobacterales</taxon>
        <taxon>Erwiniaceae</taxon>
        <taxon>Buchnera</taxon>
    </lineage>
</organism>
<gene>
    <name evidence="2" type="primary">ftsW</name>
    <name type="ordered locus">bbp_199</name>
</gene>
<dbReference type="EC" id="2.4.99.28" evidence="2"/>
<dbReference type="EMBL" id="AE016826">
    <property type="protein sequence ID" value="AAO26931.1"/>
    <property type="molecule type" value="Genomic_DNA"/>
</dbReference>
<dbReference type="RefSeq" id="WP_011091332.1">
    <property type="nucleotide sequence ID" value="NC_004545.1"/>
</dbReference>
<dbReference type="SMR" id="Q89AQ3"/>
<dbReference type="STRING" id="224915.bbp_199"/>
<dbReference type="KEGG" id="bab:bbp_199"/>
<dbReference type="eggNOG" id="COG0772">
    <property type="taxonomic scope" value="Bacteria"/>
</dbReference>
<dbReference type="HOGENOM" id="CLU_029243_1_1_6"/>
<dbReference type="OrthoDB" id="9768187at2"/>
<dbReference type="UniPathway" id="UPA00219"/>
<dbReference type="Proteomes" id="UP000000601">
    <property type="component" value="Chromosome"/>
</dbReference>
<dbReference type="GO" id="GO:0032153">
    <property type="term" value="C:cell division site"/>
    <property type="evidence" value="ECO:0007669"/>
    <property type="project" value="UniProtKB-UniRule"/>
</dbReference>
<dbReference type="GO" id="GO:0005886">
    <property type="term" value="C:plasma membrane"/>
    <property type="evidence" value="ECO:0007669"/>
    <property type="project" value="UniProtKB-SubCell"/>
</dbReference>
<dbReference type="GO" id="GO:0015648">
    <property type="term" value="F:lipid-linked peptidoglycan transporter activity"/>
    <property type="evidence" value="ECO:0007669"/>
    <property type="project" value="TreeGrafter"/>
</dbReference>
<dbReference type="GO" id="GO:0008955">
    <property type="term" value="F:peptidoglycan glycosyltransferase activity"/>
    <property type="evidence" value="ECO:0007669"/>
    <property type="project" value="UniProtKB-UniRule"/>
</dbReference>
<dbReference type="GO" id="GO:0071555">
    <property type="term" value="P:cell wall organization"/>
    <property type="evidence" value="ECO:0007669"/>
    <property type="project" value="UniProtKB-KW"/>
</dbReference>
<dbReference type="GO" id="GO:0043093">
    <property type="term" value="P:FtsZ-dependent cytokinesis"/>
    <property type="evidence" value="ECO:0007669"/>
    <property type="project" value="UniProtKB-UniRule"/>
</dbReference>
<dbReference type="GO" id="GO:0009252">
    <property type="term" value="P:peptidoglycan biosynthetic process"/>
    <property type="evidence" value="ECO:0007669"/>
    <property type="project" value="UniProtKB-UniRule"/>
</dbReference>
<dbReference type="GO" id="GO:0008360">
    <property type="term" value="P:regulation of cell shape"/>
    <property type="evidence" value="ECO:0007669"/>
    <property type="project" value="UniProtKB-KW"/>
</dbReference>
<dbReference type="HAMAP" id="MF_00913">
    <property type="entry name" value="PGT_FtsW_proteobact"/>
    <property type="match status" value="1"/>
</dbReference>
<dbReference type="InterPro" id="IPR018365">
    <property type="entry name" value="Cell_cycle_FtsW-rel_CS"/>
</dbReference>
<dbReference type="InterPro" id="IPR013437">
    <property type="entry name" value="FtsW"/>
</dbReference>
<dbReference type="InterPro" id="IPR001182">
    <property type="entry name" value="FtsW/RodA"/>
</dbReference>
<dbReference type="NCBIfam" id="TIGR02614">
    <property type="entry name" value="ftsW"/>
    <property type="match status" value="1"/>
</dbReference>
<dbReference type="NCBIfam" id="NF008042">
    <property type="entry name" value="PRK10774.1"/>
    <property type="match status" value="1"/>
</dbReference>
<dbReference type="PANTHER" id="PTHR30474">
    <property type="entry name" value="CELL CYCLE PROTEIN"/>
    <property type="match status" value="1"/>
</dbReference>
<dbReference type="PANTHER" id="PTHR30474:SF2">
    <property type="entry name" value="PEPTIDOGLYCAN GLYCOSYLTRANSFERASE FTSW-RELATED"/>
    <property type="match status" value="1"/>
</dbReference>
<dbReference type="Pfam" id="PF01098">
    <property type="entry name" value="FTSW_RODA_SPOVE"/>
    <property type="match status" value="1"/>
</dbReference>
<dbReference type="PROSITE" id="PS00428">
    <property type="entry name" value="FTSW_RODA_SPOVE"/>
    <property type="match status" value="1"/>
</dbReference>
<comment type="function">
    <text evidence="2">Peptidoglycan polymerase that is essential for cell division.</text>
</comment>
<comment type="catalytic activity">
    <reaction evidence="2">
        <text>[GlcNAc-(1-&gt;4)-Mur2Ac(oyl-L-Ala-gamma-D-Glu-L-Lys-D-Ala-D-Ala)](n)-di-trans,octa-cis-undecaprenyl diphosphate + beta-D-GlcNAc-(1-&gt;4)-Mur2Ac(oyl-L-Ala-gamma-D-Glu-L-Lys-D-Ala-D-Ala)-di-trans,octa-cis-undecaprenyl diphosphate = [GlcNAc-(1-&gt;4)-Mur2Ac(oyl-L-Ala-gamma-D-Glu-L-Lys-D-Ala-D-Ala)](n+1)-di-trans,octa-cis-undecaprenyl diphosphate + di-trans,octa-cis-undecaprenyl diphosphate + H(+)</text>
        <dbReference type="Rhea" id="RHEA:23708"/>
        <dbReference type="Rhea" id="RHEA-COMP:9602"/>
        <dbReference type="Rhea" id="RHEA-COMP:9603"/>
        <dbReference type="ChEBI" id="CHEBI:15378"/>
        <dbReference type="ChEBI" id="CHEBI:58405"/>
        <dbReference type="ChEBI" id="CHEBI:60033"/>
        <dbReference type="ChEBI" id="CHEBI:78435"/>
        <dbReference type="EC" id="2.4.99.28"/>
    </reaction>
</comment>
<comment type="pathway">
    <text evidence="2">Cell wall biogenesis; peptidoglycan biosynthesis.</text>
</comment>
<comment type="subcellular location">
    <subcellularLocation>
        <location evidence="1">Cell membrane</location>
        <topology evidence="2">Multi-pass membrane protein</topology>
    </subcellularLocation>
    <text evidence="2">Localizes to the division septum.</text>
</comment>
<comment type="similarity">
    <text evidence="2">Belongs to the SEDS family. FtsW subfamily.</text>
</comment>
<keyword id="KW-0131">Cell cycle</keyword>
<keyword id="KW-0132">Cell division</keyword>
<keyword id="KW-1003">Cell membrane</keyword>
<keyword id="KW-0133">Cell shape</keyword>
<keyword id="KW-0961">Cell wall biogenesis/degradation</keyword>
<keyword id="KW-0328">Glycosyltransferase</keyword>
<keyword id="KW-0472">Membrane</keyword>
<keyword id="KW-0573">Peptidoglycan synthesis</keyword>
<keyword id="KW-1185">Reference proteome</keyword>
<keyword id="KW-0808">Transferase</keyword>
<keyword id="KW-0812">Transmembrane</keyword>
<keyword id="KW-1133">Transmembrane helix</keyword>
<reference key="1">
    <citation type="journal article" date="2003" name="Proc. Natl. Acad. Sci. U.S.A.">
        <title>Reductive genome evolution in Buchnera aphidicola.</title>
        <authorList>
            <person name="van Ham R.C.H.J."/>
            <person name="Kamerbeek J."/>
            <person name="Palacios C."/>
            <person name="Rausell C."/>
            <person name="Abascal F."/>
            <person name="Bastolla U."/>
            <person name="Fernandez J.M."/>
            <person name="Jimenez L."/>
            <person name="Postigo M."/>
            <person name="Silva F.J."/>
            <person name="Tamames J."/>
            <person name="Viguera E."/>
            <person name="Latorre A."/>
            <person name="Valencia A."/>
            <person name="Moran F."/>
            <person name="Moya A."/>
        </authorList>
    </citation>
    <scope>NUCLEOTIDE SEQUENCE [LARGE SCALE GENOMIC DNA]</scope>
    <source>
        <strain>Bp</strain>
    </source>
</reference>
<evidence type="ECO:0000250" key="1"/>
<evidence type="ECO:0000255" key="2">
    <source>
        <dbReference type="HAMAP-Rule" id="MF_00913"/>
    </source>
</evidence>
<proteinExistence type="inferred from homology"/>
<name>FTSW_BUCBP</name>
<feature type="chain" id="PRO_0000062699" description="Probable peptidoglycan glycosyltransferase FtsW">
    <location>
        <begin position="1"/>
        <end position="380"/>
    </location>
</feature>
<feature type="transmembrane region" description="Helical" evidence="2">
    <location>
        <begin position="14"/>
        <end position="34"/>
    </location>
</feature>
<feature type="transmembrane region" description="Helical" evidence="2">
    <location>
        <begin position="52"/>
        <end position="72"/>
    </location>
</feature>
<feature type="transmembrane region" description="Helical" evidence="2">
    <location>
        <begin position="79"/>
        <end position="99"/>
    </location>
</feature>
<feature type="transmembrane region" description="Helical" evidence="2">
    <location>
        <begin position="112"/>
        <end position="131"/>
    </location>
</feature>
<feature type="transmembrane region" description="Helical" evidence="2">
    <location>
        <begin position="141"/>
        <end position="161"/>
    </location>
</feature>
<feature type="transmembrane region" description="Helical" evidence="2">
    <location>
        <begin position="162"/>
        <end position="182"/>
    </location>
</feature>
<feature type="transmembrane region" description="Helical" evidence="2">
    <location>
        <begin position="188"/>
        <end position="208"/>
    </location>
</feature>
<feature type="transmembrane region" description="Helical" evidence="2">
    <location>
        <begin position="268"/>
        <end position="288"/>
    </location>
</feature>
<feature type="transmembrane region" description="Helical" evidence="2">
    <location>
        <begin position="304"/>
        <end position="324"/>
    </location>
</feature>
<feature type="transmembrane region" description="Helical" evidence="2">
    <location>
        <begin position="341"/>
        <end position="361"/>
    </location>
</feature>
<protein>
    <recommendedName>
        <fullName evidence="2">Probable peptidoglycan glycosyltransferase FtsW</fullName>
        <shortName evidence="2">PGT</shortName>
        <ecNumber evidence="2">2.4.99.28</ecNumber>
    </recommendedName>
    <alternativeName>
        <fullName evidence="2">Cell division protein FtsW</fullName>
    </alternativeName>
    <alternativeName>
        <fullName evidence="2">Cell wall polymerase</fullName>
    </alternativeName>
    <alternativeName>
        <fullName evidence="2">Peptidoglycan polymerase</fullName>
        <shortName evidence="2">PG polymerase</shortName>
    </alternativeName>
</protein>
<accession>Q89AQ3</accession>